<dbReference type="EMBL" id="CP000053">
    <property type="protein sequence ID" value="AAY61141.1"/>
    <property type="molecule type" value="Genomic_DNA"/>
</dbReference>
<dbReference type="SMR" id="Q4UMR7"/>
<dbReference type="STRING" id="315456.RF_0290"/>
<dbReference type="KEGG" id="rfe:RF_0290"/>
<dbReference type="eggNOG" id="COG0094">
    <property type="taxonomic scope" value="Bacteria"/>
</dbReference>
<dbReference type="HOGENOM" id="CLU_061015_2_1_5"/>
<dbReference type="OrthoDB" id="9806626at2"/>
<dbReference type="Proteomes" id="UP000008548">
    <property type="component" value="Chromosome"/>
</dbReference>
<dbReference type="GO" id="GO:1990904">
    <property type="term" value="C:ribonucleoprotein complex"/>
    <property type="evidence" value="ECO:0007669"/>
    <property type="project" value="UniProtKB-KW"/>
</dbReference>
<dbReference type="GO" id="GO:0005840">
    <property type="term" value="C:ribosome"/>
    <property type="evidence" value="ECO:0007669"/>
    <property type="project" value="UniProtKB-KW"/>
</dbReference>
<dbReference type="GO" id="GO:0019843">
    <property type="term" value="F:rRNA binding"/>
    <property type="evidence" value="ECO:0007669"/>
    <property type="project" value="UniProtKB-UniRule"/>
</dbReference>
<dbReference type="GO" id="GO:0003735">
    <property type="term" value="F:structural constituent of ribosome"/>
    <property type="evidence" value="ECO:0007669"/>
    <property type="project" value="InterPro"/>
</dbReference>
<dbReference type="GO" id="GO:0000049">
    <property type="term" value="F:tRNA binding"/>
    <property type="evidence" value="ECO:0007669"/>
    <property type="project" value="UniProtKB-UniRule"/>
</dbReference>
<dbReference type="GO" id="GO:0006412">
    <property type="term" value="P:translation"/>
    <property type="evidence" value="ECO:0007669"/>
    <property type="project" value="UniProtKB-UniRule"/>
</dbReference>
<dbReference type="FunFam" id="3.30.1440.10:FF:000001">
    <property type="entry name" value="50S ribosomal protein L5"/>
    <property type="match status" value="1"/>
</dbReference>
<dbReference type="Gene3D" id="3.30.1440.10">
    <property type="match status" value="1"/>
</dbReference>
<dbReference type="HAMAP" id="MF_01333_B">
    <property type="entry name" value="Ribosomal_uL5_B"/>
    <property type="match status" value="1"/>
</dbReference>
<dbReference type="InterPro" id="IPR002132">
    <property type="entry name" value="Ribosomal_uL5"/>
</dbReference>
<dbReference type="InterPro" id="IPR020930">
    <property type="entry name" value="Ribosomal_uL5_bac-type"/>
</dbReference>
<dbReference type="InterPro" id="IPR031309">
    <property type="entry name" value="Ribosomal_uL5_C"/>
</dbReference>
<dbReference type="InterPro" id="IPR020929">
    <property type="entry name" value="Ribosomal_uL5_CS"/>
</dbReference>
<dbReference type="InterPro" id="IPR022803">
    <property type="entry name" value="Ribosomal_uL5_dom_sf"/>
</dbReference>
<dbReference type="InterPro" id="IPR031310">
    <property type="entry name" value="Ribosomal_uL5_N"/>
</dbReference>
<dbReference type="NCBIfam" id="NF000585">
    <property type="entry name" value="PRK00010.1"/>
    <property type="match status" value="1"/>
</dbReference>
<dbReference type="PANTHER" id="PTHR11994">
    <property type="entry name" value="60S RIBOSOMAL PROTEIN L11-RELATED"/>
    <property type="match status" value="1"/>
</dbReference>
<dbReference type="Pfam" id="PF00281">
    <property type="entry name" value="Ribosomal_L5"/>
    <property type="match status" value="1"/>
</dbReference>
<dbReference type="Pfam" id="PF00673">
    <property type="entry name" value="Ribosomal_L5_C"/>
    <property type="match status" value="1"/>
</dbReference>
<dbReference type="PIRSF" id="PIRSF002161">
    <property type="entry name" value="Ribosomal_L5"/>
    <property type="match status" value="1"/>
</dbReference>
<dbReference type="SUPFAM" id="SSF55282">
    <property type="entry name" value="RL5-like"/>
    <property type="match status" value="1"/>
</dbReference>
<dbReference type="PROSITE" id="PS00358">
    <property type="entry name" value="RIBOSOMAL_L5"/>
    <property type="match status" value="1"/>
</dbReference>
<gene>
    <name evidence="1" type="primary">rplE</name>
    <name type="ordered locus">RF_0290</name>
</gene>
<protein>
    <recommendedName>
        <fullName evidence="1">Large ribosomal subunit protein uL5</fullName>
    </recommendedName>
    <alternativeName>
        <fullName evidence="2">50S ribosomal protein L5</fullName>
    </alternativeName>
</protein>
<reference key="1">
    <citation type="journal article" date="2005" name="PLoS Biol.">
        <title>The genome sequence of Rickettsia felis identifies the first putative conjugative plasmid in an obligate intracellular parasite.</title>
        <authorList>
            <person name="Ogata H."/>
            <person name="Renesto P."/>
            <person name="Audic S."/>
            <person name="Robert C."/>
            <person name="Blanc G."/>
            <person name="Fournier P.-E."/>
            <person name="Parinello H."/>
            <person name="Claverie J.-M."/>
            <person name="Raoult D."/>
        </authorList>
    </citation>
    <scope>NUCLEOTIDE SEQUENCE [LARGE SCALE GENOMIC DNA]</scope>
    <source>
        <strain>ATCC VR-1525 / URRWXCal2</strain>
    </source>
</reference>
<sequence length="179" mass="20629">MLRFKELYQQKIIENLQKEFSYKSKHEIPQIKKIVINMGVGEAIADSKVINNAVNDLTLISGQKPVVTLARKSIATFKLRESMKIGCKVTLRKDRMYDFLERLVIVALPRVKEFRGFSYKSFDGKGNFTFGLKEQIVFPEINYDKIDTIRGMDITIVTSAKTDKESKFLLSGFNLPFYN</sequence>
<name>RL5_RICFE</name>
<organism>
    <name type="scientific">Rickettsia felis (strain ATCC VR-1525 / URRWXCal2)</name>
    <name type="common">Rickettsia azadi</name>
    <dbReference type="NCBI Taxonomy" id="315456"/>
    <lineage>
        <taxon>Bacteria</taxon>
        <taxon>Pseudomonadati</taxon>
        <taxon>Pseudomonadota</taxon>
        <taxon>Alphaproteobacteria</taxon>
        <taxon>Rickettsiales</taxon>
        <taxon>Rickettsiaceae</taxon>
        <taxon>Rickettsieae</taxon>
        <taxon>Rickettsia</taxon>
        <taxon>spotted fever group</taxon>
    </lineage>
</organism>
<accession>Q4UMR7</accession>
<proteinExistence type="inferred from homology"/>
<comment type="function">
    <text evidence="1">This is one of the proteins that bind and probably mediate the attachment of the 5S RNA into the large ribosomal subunit, where it forms part of the central protuberance. In the 70S ribosome it contacts protein S13 of the 30S subunit (bridge B1b), connecting the 2 subunits; this bridge is implicated in subunit movement. Contacts the P site tRNA; the 5S rRNA and some of its associated proteins might help stabilize positioning of ribosome-bound tRNAs.</text>
</comment>
<comment type="subunit">
    <text evidence="1">Part of the 50S ribosomal subunit; part of the 5S rRNA/L5/L18/L25 subcomplex. Contacts the 5S rRNA and the P site tRNA. Forms a bridge to the 30S subunit in the 70S ribosome.</text>
</comment>
<comment type="similarity">
    <text evidence="1">Belongs to the universal ribosomal protein uL5 family.</text>
</comment>
<keyword id="KW-0687">Ribonucleoprotein</keyword>
<keyword id="KW-0689">Ribosomal protein</keyword>
<keyword id="KW-0694">RNA-binding</keyword>
<keyword id="KW-0699">rRNA-binding</keyword>
<keyword id="KW-0820">tRNA-binding</keyword>
<evidence type="ECO:0000255" key="1">
    <source>
        <dbReference type="HAMAP-Rule" id="MF_01333"/>
    </source>
</evidence>
<evidence type="ECO:0000305" key="2"/>
<feature type="chain" id="PRO_0000243056" description="Large ribosomal subunit protein uL5">
    <location>
        <begin position="1"/>
        <end position="179"/>
    </location>
</feature>